<comment type="function">
    <text evidence="1">An accessory protein needed during the final step in the assembly of 30S ribosomal subunit, possibly for assembly of the head region. Essential for efficient processing of 16S rRNA. May be needed both before and after RbfA during the maturation of 16S rRNA. It has affinity for free ribosomal 30S subunits but not for 70S ribosomes.</text>
</comment>
<comment type="subunit">
    <text evidence="1">Binds ribosomal protein uS19.</text>
</comment>
<comment type="subcellular location">
    <subcellularLocation>
        <location evidence="1">Cytoplasm</location>
    </subcellularLocation>
</comment>
<comment type="domain">
    <text evidence="1">The PRC barrel domain binds ribosomal protein uS19.</text>
</comment>
<comment type="similarity">
    <text evidence="1">Belongs to the RimM family.</text>
</comment>
<proteinExistence type="inferred from homology"/>
<keyword id="KW-0143">Chaperone</keyword>
<keyword id="KW-0963">Cytoplasm</keyword>
<keyword id="KW-0690">Ribosome biogenesis</keyword>
<keyword id="KW-0698">rRNA processing</keyword>
<reference key="1">
    <citation type="journal article" date="2008" name="BMC Genomics">
        <title>The genome sequence of the fish pathogen Aliivibrio salmonicida strain LFI1238 shows extensive evidence of gene decay.</title>
        <authorList>
            <person name="Hjerde E."/>
            <person name="Lorentzen M.S."/>
            <person name="Holden M.T."/>
            <person name="Seeger K."/>
            <person name="Paulsen S."/>
            <person name="Bason N."/>
            <person name="Churcher C."/>
            <person name="Harris D."/>
            <person name="Norbertczak H."/>
            <person name="Quail M.A."/>
            <person name="Sanders S."/>
            <person name="Thurston S."/>
            <person name="Parkhill J."/>
            <person name="Willassen N.P."/>
            <person name="Thomson N.R."/>
        </authorList>
    </citation>
    <scope>NUCLEOTIDE SEQUENCE [LARGE SCALE GENOMIC DNA]</scope>
    <source>
        <strain>LFI1238</strain>
    </source>
</reference>
<dbReference type="EMBL" id="FM178379">
    <property type="protein sequence ID" value="CAQ78335.1"/>
    <property type="molecule type" value="Genomic_DNA"/>
</dbReference>
<dbReference type="RefSeq" id="WP_012549457.1">
    <property type="nucleotide sequence ID" value="NC_011312.1"/>
</dbReference>
<dbReference type="SMR" id="B6EGC0"/>
<dbReference type="KEGG" id="vsa:VSAL_I0650"/>
<dbReference type="eggNOG" id="COG0806">
    <property type="taxonomic scope" value="Bacteria"/>
</dbReference>
<dbReference type="HOGENOM" id="CLU_077636_1_0_6"/>
<dbReference type="Proteomes" id="UP000001730">
    <property type="component" value="Chromosome 1"/>
</dbReference>
<dbReference type="GO" id="GO:0005737">
    <property type="term" value="C:cytoplasm"/>
    <property type="evidence" value="ECO:0007669"/>
    <property type="project" value="UniProtKB-SubCell"/>
</dbReference>
<dbReference type="GO" id="GO:0005840">
    <property type="term" value="C:ribosome"/>
    <property type="evidence" value="ECO:0007669"/>
    <property type="project" value="InterPro"/>
</dbReference>
<dbReference type="GO" id="GO:0043022">
    <property type="term" value="F:ribosome binding"/>
    <property type="evidence" value="ECO:0007669"/>
    <property type="project" value="InterPro"/>
</dbReference>
<dbReference type="GO" id="GO:0042274">
    <property type="term" value="P:ribosomal small subunit biogenesis"/>
    <property type="evidence" value="ECO:0007669"/>
    <property type="project" value="UniProtKB-UniRule"/>
</dbReference>
<dbReference type="GO" id="GO:0006364">
    <property type="term" value="P:rRNA processing"/>
    <property type="evidence" value="ECO:0007669"/>
    <property type="project" value="UniProtKB-UniRule"/>
</dbReference>
<dbReference type="Gene3D" id="2.30.30.240">
    <property type="entry name" value="PRC-barrel domain"/>
    <property type="match status" value="1"/>
</dbReference>
<dbReference type="Gene3D" id="2.40.30.60">
    <property type="entry name" value="RimM"/>
    <property type="match status" value="1"/>
</dbReference>
<dbReference type="HAMAP" id="MF_00014">
    <property type="entry name" value="Ribosome_mat_RimM"/>
    <property type="match status" value="1"/>
</dbReference>
<dbReference type="InterPro" id="IPR011033">
    <property type="entry name" value="PRC_barrel-like_sf"/>
</dbReference>
<dbReference type="InterPro" id="IPR056792">
    <property type="entry name" value="PRC_RimM"/>
</dbReference>
<dbReference type="InterPro" id="IPR011961">
    <property type="entry name" value="RimM"/>
</dbReference>
<dbReference type="InterPro" id="IPR002676">
    <property type="entry name" value="RimM_N"/>
</dbReference>
<dbReference type="InterPro" id="IPR036976">
    <property type="entry name" value="RimM_N_sf"/>
</dbReference>
<dbReference type="InterPro" id="IPR009000">
    <property type="entry name" value="Transl_B-barrel_sf"/>
</dbReference>
<dbReference type="NCBIfam" id="TIGR02273">
    <property type="entry name" value="16S_RimM"/>
    <property type="match status" value="1"/>
</dbReference>
<dbReference type="PANTHER" id="PTHR33692">
    <property type="entry name" value="RIBOSOME MATURATION FACTOR RIMM"/>
    <property type="match status" value="1"/>
</dbReference>
<dbReference type="PANTHER" id="PTHR33692:SF1">
    <property type="entry name" value="RIBOSOME MATURATION FACTOR RIMM"/>
    <property type="match status" value="1"/>
</dbReference>
<dbReference type="Pfam" id="PF24986">
    <property type="entry name" value="PRC_RimM"/>
    <property type="match status" value="1"/>
</dbReference>
<dbReference type="Pfam" id="PF01782">
    <property type="entry name" value="RimM"/>
    <property type="match status" value="1"/>
</dbReference>
<dbReference type="SUPFAM" id="SSF50346">
    <property type="entry name" value="PRC-barrel domain"/>
    <property type="match status" value="1"/>
</dbReference>
<dbReference type="SUPFAM" id="SSF50447">
    <property type="entry name" value="Translation proteins"/>
    <property type="match status" value="1"/>
</dbReference>
<sequence length="175" mass="20040">MSKQDEVIVVGKFGASYGIRGWLKVVSFTDQPESIFDYKPLLIKVKDEWVEFSVESWKRHKGLVCKLEGLEVREEAQAYTNLEIAVKADALPELSEDEFYWRELFGMEVVTSQGYGLGIVDDIFETGSNDVLVVKANLKDAFGKKERLIPFIDEQVIKVIDREAQRIEVDWDPGF</sequence>
<gene>
    <name evidence="1" type="primary">rimM</name>
    <name type="ordered locus">VSAL_I0650</name>
</gene>
<evidence type="ECO:0000255" key="1">
    <source>
        <dbReference type="HAMAP-Rule" id="MF_00014"/>
    </source>
</evidence>
<name>RIMM_ALISL</name>
<feature type="chain" id="PRO_1000089487" description="Ribosome maturation factor RimM">
    <location>
        <begin position="1"/>
        <end position="175"/>
    </location>
</feature>
<feature type="domain" description="PRC barrel" evidence="1">
    <location>
        <begin position="95"/>
        <end position="175"/>
    </location>
</feature>
<accession>B6EGC0</accession>
<protein>
    <recommendedName>
        <fullName evidence="1">Ribosome maturation factor RimM</fullName>
    </recommendedName>
</protein>
<organism>
    <name type="scientific">Aliivibrio salmonicida (strain LFI1238)</name>
    <name type="common">Vibrio salmonicida (strain LFI1238)</name>
    <dbReference type="NCBI Taxonomy" id="316275"/>
    <lineage>
        <taxon>Bacteria</taxon>
        <taxon>Pseudomonadati</taxon>
        <taxon>Pseudomonadota</taxon>
        <taxon>Gammaproteobacteria</taxon>
        <taxon>Vibrionales</taxon>
        <taxon>Vibrionaceae</taxon>
        <taxon>Aliivibrio</taxon>
    </lineage>
</organism>